<evidence type="ECO:0000255" key="1">
    <source>
        <dbReference type="HAMAP-Rule" id="MF_01866"/>
    </source>
</evidence>
<accession>B7LSK4</accession>
<name>YCGL_ESCF3</name>
<reference key="1">
    <citation type="journal article" date="2009" name="PLoS Genet.">
        <title>Organised genome dynamics in the Escherichia coli species results in highly diverse adaptive paths.</title>
        <authorList>
            <person name="Touchon M."/>
            <person name="Hoede C."/>
            <person name="Tenaillon O."/>
            <person name="Barbe V."/>
            <person name="Baeriswyl S."/>
            <person name="Bidet P."/>
            <person name="Bingen E."/>
            <person name="Bonacorsi S."/>
            <person name="Bouchier C."/>
            <person name="Bouvet O."/>
            <person name="Calteau A."/>
            <person name="Chiapello H."/>
            <person name="Clermont O."/>
            <person name="Cruveiller S."/>
            <person name="Danchin A."/>
            <person name="Diard M."/>
            <person name="Dossat C."/>
            <person name="Karoui M.E."/>
            <person name="Frapy E."/>
            <person name="Garry L."/>
            <person name="Ghigo J.M."/>
            <person name="Gilles A.M."/>
            <person name="Johnson J."/>
            <person name="Le Bouguenec C."/>
            <person name="Lescat M."/>
            <person name="Mangenot S."/>
            <person name="Martinez-Jehanne V."/>
            <person name="Matic I."/>
            <person name="Nassif X."/>
            <person name="Oztas S."/>
            <person name="Petit M.A."/>
            <person name="Pichon C."/>
            <person name="Rouy Z."/>
            <person name="Ruf C.S."/>
            <person name="Schneider D."/>
            <person name="Tourret J."/>
            <person name="Vacherie B."/>
            <person name="Vallenet D."/>
            <person name="Medigue C."/>
            <person name="Rocha E.P.C."/>
            <person name="Denamur E."/>
        </authorList>
    </citation>
    <scope>NUCLEOTIDE SEQUENCE [LARGE SCALE GENOMIC DNA]</scope>
    <source>
        <strain>ATCC 35469 / DSM 13698 / BCRC 15582 / CCUG 18766 / IAM 14443 / JCM 21226 / LMG 7866 / NBRC 102419 / NCTC 12128 / CDC 0568-73</strain>
    </source>
</reference>
<feature type="chain" id="PRO_0000375306" description="Protein YcgL">
    <location>
        <begin position="1"/>
        <end position="97"/>
    </location>
</feature>
<feature type="domain" description="YcgL" evidence="1">
    <location>
        <begin position="1"/>
        <end position="85"/>
    </location>
</feature>
<sequence>MLCVIYRSSKRDQTYLYVEKKDDFSRVPEELMQGFGKPQLAMILPLDGRKKLVNADIEKVKKALTEQGYYLQLPPPPEDLLKQHLSLTGHIRTESEQ</sequence>
<organism>
    <name type="scientific">Escherichia fergusonii (strain ATCC 35469 / DSM 13698 / CCUG 18766 / IAM 14443 / JCM 21226 / LMG 7866 / NBRC 102419 / NCTC 12128 / CDC 0568-73)</name>
    <dbReference type="NCBI Taxonomy" id="585054"/>
    <lineage>
        <taxon>Bacteria</taxon>
        <taxon>Pseudomonadati</taxon>
        <taxon>Pseudomonadota</taxon>
        <taxon>Gammaproteobacteria</taxon>
        <taxon>Enterobacterales</taxon>
        <taxon>Enterobacteriaceae</taxon>
        <taxon>Escherichia</taxon>
    </lineage>
</organism>
<proteinExistence type="inferred from homology"/>
<protein>
    <recommendedName>
        <fullName evidence="1">Protein YcgL</fullName>
    </recommendedName>
</protein>
<gene>
    <name evidence="1" type="primary">ycgL</name>
    <name type="ordered locus">EFER_1775</name>
</gene>
<dbReference type="EMBL" id="CU928158">
    <property type="protein sequence ID" value="CAQ89290.1"/>
    <property type="molecule type" value="Genomic_DNA"/>
</dbReference>
<dbReference type="RefSeq" id="WP_000882814.1">
    <property type="nucleotide sequence ID" value="NC_011740.1"/>
</dbReference>
<dbReference type="SMR" id="B7LSK4"/>
<dbReference type="KEGG" id="efe:EFER_1775"/>
<dbReference type="HOGENOM" id="CLU_155118_1_0_6"/>
<dbReference type="OrthoDB" id="7062382at2"/>
<dbReference type="Proteomes" id="UP000000745">
    <property type="component" value="Chromosome"/>
</dbReference>
<dbReference type="Gene3D" id="3.10.510.20">
    <property type="entry name" value="YcgL domain"/>
    <property type="match status" value="1"/>
</dbReference>
<dbReference type="HAMAP" id="MF_01866">
    <property type="entry name" value="UPF0745"/>
    <property type="match status" value="1"/>
</dbReference>
<dbReference type="InterPro" id="IPR038068">
    <property type="entry name" value="YcgL-like_sf"/>
</dbReference>
<dbReference type="InterPro" id="IPR027354">
    <property type="entry name" value="YcgL_dom"/>
</dbReference>
<dbReference type="PANTHER" id="PTHR38109">
    <property type="entry name" value="PROTEIN YCGL"/>
    <property type="match status" value="1"/>
</dbReference>
<dbReference type="PANTHER" id="PTHR38109:SF1">
    <property type="entry name" value="PROTEIN YCGL"/>
    <property type="match status" value="1"/>
</dbReference>
<dbReference type="Pfam" id="PF05166">
    <property type="entry name" value="YcgL"/>
    <property type="match status" value="1"/>
</dbReference>
<dbReference type="SUPFAM" id="SSF160191">
    <property type="entry name" value="YcgL-like"/>
    <property type="match status" value="1"/>
</dbReference>
<dbReference type="PROSITE" id="PS51648">
    <property type="entry name" value="YCGL"/>
    <property type="match status" value="1"/>
</dbReference>